<organism>
    <name type="scientific">Finegoldia magna (strain ATCC 29328 / DSM 20472 / WAL 2508)</name>
    <name type="common">Peptostreptococcus magnus</name>
    <dbReference type="NCBI Taxonomy" id="334413"/>
    <lineage>
        <taxon>Bacteria</taxon>
        <taxon>Bacillati</taxon>
        <taxon>Bacillota</taxon>
        <taxon>Tissierellia</taxon>
        <taxon>Tissierellales</taxon>
        <taxon>Peptoniphilaceae</taxon>
        <taxon>Finegoldia</taxon>
    </lineage>
</organism>
<evidence type="ECO:0000255" key="1">
    <source>
        <dbReference type="HAMAP-Rule" id="MF_01328"/>
    </source>
</evidence>
<evidence type="ECO:0000256" key="2">
    <source>
        <dbReference type="SAM" id="MobiDB-lite"/>
    </source>
</evidence>
<evidence type="ECO:0000305" key="3"/>
<comment type="function">
    <text evidence="1">One of the primary rRNA binding proteins, this protein initially binds near the 5'-end of the 23S rRNA. It is important during the early stages of 50S assembly. It makes multiple contacts with different domains of the 23S rRNA in the assembled 50S subunit and ribosome.</text>
</comment>
<comment type="function">
    <text evidence="1">Forms part of the polypeptide exit tunnel.</text>
</comment>
<comment type="subunit">
    <text evidence="1">Part of the 50S ribosomal subunit.</text>
</comment>
<comment type="similarity">
    <text evidence="1">Belongs to the universal ribosomal protein uL4 family.</text>
</comment>
<accession>B0RZU1</accession>
<keyword id="KW-1185">Reference proteome</keyword>
<keyword id="KW-0687">Ribonucleoprotein</keyword>
<keyword id="KW-0689">Ribosomal protein</keyword>
<keyword id="KW-0694">RNA-binding</keyword>
<keyword id="KW-0699">rRNA-binding</keyword>
<proteinExistence type="inferred from homology"/>
<sequence>MPKVQILNQQGENVGELELNEAIFGVDVNEHVVYEVVKNQLANKRQGTQSAKTRSEVRGGGRKPWRQKGTGRARQGSIRSPQWRGGGVVFAPKPRDYSYAVPKKVRRLAIKSVLTEKVNDNEMIVLDKLNLDAISTKKAVEVLKNIKADKKALVVIDKNDDTLYRSFRNIENVAICEAKLINVYDCLKYNSLVITTDAVKILEEVFQ</sequence>
<reference key="1">
    <citation type="journal article" date="2008" name="DNA Res.">
        <title>Complete genome sequence of Finegoldia magna, an anaerobic opportunistic pathogen.</title>
        <authorList>
            <person name="Goto T."/>
            <person name="Yamashita A."/>
            <person name="Hirakawa H."/>
            <person name="Matsutani M."/>
            <person name="Todo K."/>
            <person name="Ohshima K."/>
            <person name="Toh H."/>
            <person name="Miyamoto K."/>
            <person name="Kuhara S."/>
            <person name="Hattori M."/>
            <person name="Shimizu T."/>
            <person name="Akimoto S."/>
        </authorList>
    </citation>
    <scope>NUCLEOTIDE SEQUENCE [LARGE SCALE GENOMIC DNA]</scope>
    <source>
        <strain>ATCC 29328 / DSM 20472 / WAL 2508</strain>
    </source>
</reference>
<gene>
    <name evidence="1" type="primary">rplD</name>
    <name type="ordered locus">FMG_0156</name>
</gene>
<feature type="chain" id="PRO_1000142128" description="Large ribosomal subunit protein uL4">
    <location>
        <begin position="1"/>
        <end position="207"/>
    </location>
</feature>
<feature type="region of interest" description="Disordered" evidence="2">
    <location>
        <begin position="44"/>
        <end position="81"/>
    </location>
</feature>
<feature type="compositionally biased region" description="Basic residues" evidence="2">
    <location>
        <begin position="60"/>
        <end position="71"/>
    </location>
</feature>
<dbReference type="EMBL" id="AP008971">
    <property type="protein sequence ID" value="BAG07574.1"/>
    <property type="molecule type" value="Genomic_DNA"/>
</dbReference>
<dbReference type="RefSeq" id="WP_002837375.1">
    <property type="nucleotide sequence ID" value="NC_010376.1"/>
</dbReference>
<dbReference type="SMR" id="B0RZU1"/>
<dbReference type="STRING" id="334413.FMG_0156"/>
<dbReference type="KEGG" id="fma:FMG_0156"/>
<dbReference type="eggNOG" id="COG0088">
    <property type="taxonomic scope" value="Bacteria"/>
</dbReference>
<dbReference type="HOGENOM" id="CLU_041575_5_2_9"/>
<dbReference type="Proteomes" id="UP000001319">
    <property type="component" value="Chromosome"/>
</dbReference>
<dbReference type="GO" id="GO:1990904">
    <property type="term" value="C:ribonucleoprotein complex"/>
    <property type="evidence" value="ECO:0007669"/>
    <property type="project" value="UniProtKB-KW"/>
</dbReference>
<dbReference type="GO" id="GO:0005840">
    <property type="term" value="C:ribosome"/>
    <property type="evidence" value="ECO:0007669"/>
    <property type="project" value="UniProtKB-KW"/>
</dbReference>
<dbReference type="GO" id="GO:0019843">
    <property type="term" value="F:rRNA binding"/>
    <property type="evidence" value="ECO:0007669"/>
    <property type="project" value="UniProtKB-UniRule"/>
</dbReference>
<dbReference type="GO" id="GO:0003735">
    <property type="term" value="F:structural constituent of ribosome"/>
    <property type="evidence" value="ECO:0007669"/>
    <property type="project" value="InterPro"/>
</dbReference>
<dbReference type="GO" id="GO:0006412">
    <property type="term" value="P:translation"/>
    <property type="evidence" value="ECO:0007669"/>
    <property type="project" value="UniProtKB-UniRule"/>
</dbReference>
<dbReference type="Gene3D" id="3.40.1370.10">
    <property type="match status" value="1"/>
</dbReference>
<dbReference type="HAMAP" id="MF_01328_B">
    <property type="entry name" value="Ribosomal_uL4_B"/>
    <property type="match status" value="1"/>
</dbReference>
<dbReference type="InterPro" id="IPR002136">
    <property type="entry name" value="Ribosomal_uL4"/>
</dbReference>
<dbReference type="InterPro" id="IPR013005">
    <property type="entry name" value="Ribosomal_uL4-like"/>
</dbReference>
<dbReference type="InterPro" id="IPR023574">
    <property type="entry name" value="Ribosomal_uL4_dom_sf"/>
</dbReference>
<dbReference type="NCBIfam" id="TIGR03953">
    <property type="entry name" value="rplD_bact"/>
    <property type="match status" value="1"/>
</dbReference>
<dbReference type="PANTHER" id="PTHR10746">
    <property type="entry name" value="50S RIBOSOMAL PROTEIN L4"/>
    <property type="match status" value="1"/>
</dbReference>
<dbReference type="PANTHER" id="PTHR10746:SF6">
    <property type="entry name" value="LARGE RIBOSOMAL SUBUNIT PROTEIN UL4M"/>
    <property type="match status" value="1"/>
</dbReference>
<dbReference type="Pfam" id="PF00573">
    <property type="entry name" value="Ribosomal_L4"/>
    <property type="match status" value="1"/>
</dbReference>
<dbReference type="SUPFAM" id="SSF52166">
    <property type="entry name" value="Ribosomal protein L4"/>
    <property type="match status" value="1"/>
</dbReference>
<protein>
    <recommendedName>
        <fullName evidence="1">Large ribosomal subunit protein uL4</fullName>
    </recommendedName>
    <alternativeName>
        <fullName evidence="3">50S ribosomal protein L4</fullName>
    </alternativeName>
</protein>
<name>RL4_FINM2</name>